<proteinExistence type="evidence at protein level"/>
<dbReference type="EMBL" id="AE015451">
    <property type="protein sequence ID" value="AAN67008.1"/>
    <property type="molecule type" value="Genomic_DNA"/>
</dbReference>
<dbReference type="RefSeq" id="NP_743544.1">
    <property type="nucleotide sequence ID" value="NC_002947.4"/>
</dbReference>
<dbReference type="RefSeq" id="WP_010952493.1">
    <property type="nucleotide sequence ID" value="NZ_CP169744.1"/>
</dbReference>
<dbReference type="SMR" id="Q88N31"/>
<dbReference type="STRING" id="160488.PP_1385"/>
<dbReference type="PaxDb" id="160488-PP_1385"/>
<dbReference type="KEGG" id="ppu:PP_1385"/>
<dbReference type="PATRIC" id="fig|160488.4.peg.1469"/>
<dbReference type="eggNOG" id="COG0841">
    <property type="taxonomic scope" value="Bacteria"/>
</dbReference>
<dbReference type="HOGENOM" id="CLU_002755_0_1_6"/>
<dbReference type="OrthoDB" id="9757904at2"/>
<dbReference type="PhylomeDB" id="Q88N31"/>
<dbReference type="BioCyc" id="PPUT160488:G1G01-1475-MONOMER"/>
<dbReference type="Proteomes" id="UP000000556">
    <property type="component" value="Chromosome"/>
</dbReference>
<dbReference type="GO" id="GO:0005886">
    <property type="term" value="C:plasma membrane"/>
    <property type="evidence" value="ECO:0007669"/>
    <property type="project" value="UniProtKB-SubCell"/>
</dbReference>
<dbReference type="GO" id="GO:0015562">
    <property type="term" value="F:efflux transmembrane transporter activity"/>
    <property type="evidence" value="ECO:0007669"/>
    <property type="project" value="InterPro"/>
</dbReference>
<dbReference type="GO" id="GO:0042910">
    <property type="term" value="F:xenobiotic transmembrane transporter activity"/>
    <property type="evidence" value="ECO:0007669"/>
    <property type="project" value="TreeGrafter"/>
</dbReference>
<dbReference type="FunFam" id="1.20.1640.10:FF:000001">
    <property type="entry name" value="Efflux pump membrane transporter"/>
    <property type="match status" value="1"/>
</dbReference>
<dbReference type="FunFam" id="3.30.2090.10:FF:000001">
    <property type="entry name" value="Efflux pump membrane transporter"/>
    <property type="match status" value="1"/>
</dbReference>
<dbReference type="FunFam" id="3.30.2090.10:FF:000002">
    <property type="entry name" value="Efflux pump membrane transporter"/>
    <property type="match status" value="1"/>
</dbReference>
<dbReference type="FunFam" id="3.30.70.1430:FF:000001">
    <property type="entry name" value="Efflux pump membrane transporter"/>
    <property type="match status" value="1"/>
</dbReference>
<dbReference type="FunFam" id="3.30.70.1430:FF:000002">
    <property type="entry name" value="Efflux pump membrane transporter"/>
    <property type="match status" value="1"/>
</dbReference>
<dbReference type="Gene3D" id="3.30.70.1430">
    <property type="entry name" value="Multidrug efflux transporter AcrB pore domain"/>
    <property type="match status" value="2"/>
</dbReference>
<dbReference type="Gene3D" id="3.30.70.1440">
    <property type="entry name" value="Multidrug efflux transporter AcrB pore domain"/>
    <property type="match status" value="1"/>
</dbReference>
<dbReference type="Gene3D" id="3.30.70.1320">
    <property type="entry name" value="Multidrug efflux transporter AcrB pore domain like"/>
    <property type="match status" value="1"/>
</dbReference>
<dbReference type="Gene3D" id="3.30.2090.10">
    <property type="entry name" value="Multidrug efflux transporter AcrB TolC docking domain, DN and DC subdomains"/>
    <property type="match status" value="2"/>
</dbReference>
<dbReference type="Gene3D" id="1.20.1640.10">
    <property type="entry name" value="Multidrug efflux transporter AcrB transmembrane domain"/>
    <property type="match status" value="2"/>
</dbReference>
<dbReference type="InterPro" id="IPR027463">
    <property type="entry name" value="AcrB_DN_DC_subdom"/>
</dbReference>
<dbReference type="InterPro" id="IPR001036">
    <property type="entry name" value="Acrflvin-R"/>
</dbReference>
<dbReference type="InterPro" id="IPR004764">
    <property type="entry name" value="MdtF-like"/>
</dbReference>
<dbReference type="NCBIfam" id="TIGR00915">
    <property type="entry name" value="2A0602"/>
    <property type="match status" value="1"/>
</dbReference>
<dbReference type="NCBIfam" id="NF000282">
    <property type="entry name" value="RND_permease_1"/>
    <property type="match status" value="1"/>
</dbReference>
<dbReference type="PANTHER" id="PTHR32063">
    <property type="match status" value="1"/>
</dbReference>
<dbReference type="PANTHER" id="PTHR32063:SF13">
    <property type="entry name" value="MULTIDRUG EFFLUX PUMP SUBUNIT ACRB-RELATED"/>
    <property type="match status" value="1"/>
</dbReference>
<dbReference type="Pfam" id="PF00873">
    <property type="entry name" value="ACR_tran"/>
    <property type="match status" value="1"/>
</dbReference>
<dbReference type="PRINTS" id="PR00702">
    <property type="entry name" value="ACRIFLAVINRP"/>
</dbReference>
<dbReference type="SUPFAM" id="SSF82693">
    <property type="entry name" value="Multidrug efflux transporter AcrB pore domain, PN1, PN2, PC1 and PC2 subdomains"/>
    <property type="match status" value="4"/>
</dbReference>
<dbReference type="SUPFAM" id="SSF82714">
    <property type="entry name" value="Multidrug efflux transporter AcrB TolC docking domain, DN and DC subdomains"/>
    <property type="match status" value="2"/>
</dbReference>
<dbReference type="SUPFAM" id="SSF82866">
    <property type="entry name" value="Multidrug efflux transporter AcrB transmembrane domain"/>
    <property type="match status" value="2"/>
</dbReference>
<organism>
    <name type="scientific">Pseudomonas putida (strain ATCC 47054 / DSM 6125 / CFBP 8728 / NCIMB 11950 / KT2440)</name>
    <dbReference type="NCBI Taxonomy" id="160488"/>
    <lineage>
        <taxon>Bacteria</taxon>
        <taxon>Pseudomonadati</taxon>
        <taxon>Pseudomonadota</taxon>
        <taxon>Gammaproteobacteria</taxon>
        <taxon>Pseudomonadales</taxon>
        <taxon>Pseudomonadaceae</taxon>
        <taxon>Pseudomonas</taxon>
    </lineage>
</organism>
<comment type="function">
    <text>Probable membrane transporter component of the TtgABC efflux pump with unknown specificity.</text>
</comment>
<comment type="subcellular location">
    <subcellularLocation>
        <location evidence="2">Cell inner membrane</location>
        <topology evidence="2">Multi-pass membrane protein</topology>
    </subcellularLocation>
</comment>
<comment type="similarity">
    <text evidence="2">Belongs to the resistance-nodulation-cell division (RND) (TC 2.A.6) family.</text>
</comment>
<comment type="caution">
    <text evidence="2">There are 4 nearly identical operons in various strains of P.putida. The ttgABC operon of strain DOT-T1E and the mepABC operon of strain KT2442-TOL function in solvent and antibiotic efflux; however in strain S12 the arpABC operon functions only in antibiotic efflux. This may be due to different protein expression levels. In KT2400 this operon does not seem to function in toluene efflux.</text>
</comment>
<evidence type="ECO:0000255" key="1"/>
<evidence type="ECO:0000305" key="2"/>
<gene>
    <name type="primary">ttgB</name>
    <name type="ordered locus">PP_1385</name>
</gene>
<reference key="1">
    <citation type="journal article" date="2002" name="Environ. Microbiol.">
        <title>Complete genome sequence and comparative analysis of the metabolically versatile Pseudomonas putida KT2440.</title>
        <authorList>
            <person name="Nelson K.E."/>
            <person name="Weinel C."/>
            <person name="Paulsen I.T."/>
            <person name="Dodson R.J."/>
            <person name="Hilbert H."/>
            <person name="Martins dos Santos V.A.P."/>
            <person name="Fouts D.E."/>
            <person name="Gill S.R."/>
            <person name="Pop M."/>
            <person name="Holmes M."/>
            <person name="Brinkac L.M."/>
            <person name="Beanan M.J."/>
            <person name="DeBoy R.T."/>
            <person name="Daugherty S.C."/>
            <person name="Kolonay J.F."/>
            <person name="Madupu R."/>
            <person name="Nelson W.C."/>
            <person name="White O."/>
            <person name="Peterson J.D."/>
            <person name="Khouri H.M."/>
            <person name="Hance I."/>
            <person name="Chris Lee P."/>
            <person name="Holtzapple E.K."/>
            <person name="Scanlan D."/>
            <person name="Tran K."/>
            <person name="Moazzez A."/>
            <person name="Utterback T.R."/>
            <person name="Rizzo M."/>
            <person name="Lee K."/>
            <person name="Kosack D."/>
            <person name="Moestl D."/>
            <person name="Wedler H."/>
            <person name="Lauber J."/>
            <person name="Stjepandic D."/>
            <person name="Hoheisel J."/>
            <person name="Straetz M."/>
            <person name="Heim S."/>
            <person name="Kiewitz C."/>
            <person name="Eisen J.A."/>
            <person name="Timmis K.N."/>
            <person name="Duesterhoeft A."/>
            <person name="Tuemmler B."/>
            <person name="Fraser C.M."/>
        </authorList>
    </citation>
    <scope>NUCLEOTIDE SEQUENCE [LARGE SCALE GENOMIC DNA]</scope>
    <source>
        <strain>ATCC 47054 / DSM 6125 / CFBP 8728 / NCIMB 11950 / KT2440</strain>
    </source>
</reference>
<reference key="2">
    <citation type="journal article" date="2003" name="Extremophiles">
        <title>Comparative genomic analysis of solvent extrusion pumps in Pseudomonas strains exhibiting different degrees of solvent tolerance.</title>
        <authorList>
            <person name="Segura A."/>
            <person name="Rojas A."/>
            <person name="Hurtado A."/>
            <person name="Huertas M.J."/>
            <person name="Ramos J.L."/>
        </authorList>
    </citation>
    <scope>CHARACTERIZATION</scope>
</reference>
<sequence>MSKFFIDRPIFAWVIALVIMLVGALSILKLPINQYPSIAPPAIAIAVTYPGASAQTVQDTVVQVIEQQLNGIDNLRYVSSESNSDGSMTITATFEQGTNPDTAQVQVQNKLNLATPLLPQEVQQQGIRVTKAVKNFLLVIGLVSEDGSMTKDDLANYIVSNMQDPISRTAGVGDFQVFGAQYAMRIWLDPAKLNKFQLTPVDVKTAVAAQNVQVSSGQLGGLPALPGTQLNATIIGKTRLQTAEQFESILLKVNKDGSQVRLGDVAQVGLGGENYAVSAQFNGKPASGLAVKLATGANALDTAKALRETIKGLEPFFPPGVKAVFPYDTTPVVTESISGVIHTLIEAVVLVFLVMYLFLQNFRATIITTMTVPVVLLGTFGILAAAGFSINTLTMFAMVLAIGLLVDDAIVVVENVERVMSEEGLPPKEATKRSMEQIQGALVGIALVLSAVLLPMAFFGGSTGVIYRQFSITIVSAMGLSVLVALIFTPALCATMLKPLKKGEHHTAKGGFFGWFNRNFDRSVNGYERSVGAILRNKVPFLLAYALIVVGMIWLFARIPTAFLPEEDQGVLFAQVQTPAGSSAERTQVVVDQMREYLLKDEADTVSSVFTVNGFNFAGRGQSSGMAFIMLKPWDERSKENSVFALAQRAQQHFFTFRDAMVFAFAPPAVLELGNATGFDVFLQDRGGVGHEKLMEARNQFLAKAAQSKILSAVRPNGLNDEPQYQLTIDDERASALGVTIADINNTLSIALGASYVNDFIDRGRVKKVYIQGEPSARMSPEDLQKWYVRNGAGEMVPFSSFAKGEWTYGSPKLSRYNGVEAMEILGAPAPGYSTGEAMAEVERIAGELPSGIGFSWTGMSYEEKLSGSQMPALFALSVLFVFLCLAALYESWSIPIAVVLVVPLGIIGALIATSLRGLSNDVYFLVGLLTTIGLAAKNAILIVEFAKELHEQGRSLYDAAIEACRMRLRPIIMTSLAFILGVVPLTIASGAGAGSQHAIGTGVIGGMISATVLAIFWVPLFFVAVSSLFGSKEPEKDVTPENPRYEAGQ</sequence>
<name>TTGB_PSEPK</name>
<protein>
    <recommendedName>
        <fullName>Probable efflux pump membrane transporter TtgB</fullName>
    </recommendedName>
</protein>
<accession>Q88N31</accession>
<feature type="chain" id="PRO_0000161848" description="Probable efflux pump membrane transporter TtgB">
    <location>
        <begin position="1"/>
        <end position="1050"/>
    </location>
</feature>
<feature type="transmembrane region" description="Helical" evidence="1">
    <location>
        <begin position="10"/>
        <end position="30"/>
    </location>
</feature>
<feature type="transmembrane region" description="Helical" evidence="1">
    <location>
        <begin position="339"/>
        <end position="359"/>
    </location>
</feature>
<feature type="transmembrane region" description="Helical" evidence="1">
    <location>
        <begin position="370"/>
        <end position="390"/>
    </location>
</feature>
<feature type="transmembrane region" description="Helical" evidence="1">
    <location>
        <begin position="393"/>
        <end position="413"/>
    </location>
</feature>
<feature type="transmembrane region" description="Helical" evidence="1">
    <location>
        <begin position="440"/>
        <end position="460"/>
    </location>
</feature>
<feature type="transmembrane region" description="Helical" evidence="1">
    <location>
        <begin position="472"/>
        <end position="492"/>
    </location>
</feature>
<feature type="transmembrane region" description="Helical" evidence="1">
    <location>
        <begin position="539"/>
        <end position="559"/>
    </location>
</feature>
<feature type="transmembrane region" description="Helical" evidence="1">
    <location>
        <begin position="871"/>
        <end position="891"/>
    </location>
</feature>
<feature type="transmembrane region" description="Helical" evidence="1">
    <location>
        <begin position="893"/>
        <end position="913"/>
    </location>
</feature>
<feature type="transmembrane region" description="Helical" evidence="1">
    <location>
        <begin position="923"/>
        <end position="943"/>
    </location>
</feature>
<feature type="transmembrane region" description="Helical" evidence="1">
    <location>
        <begin position="972"/>
        <end position="992"/>
    </location>
</feature>
<feature type="transmembrane region" description="Helical" evidence="1">
    <location>
        <begin position="1004"/>
        <end position="1024"/>
    </location>
</feature>
<keyword id="KW-0997">Cell inner membrane</keyword>
<keyword id="KW-1003">Cell membrane</keyword>
<keyword id="KW-0472">Membrane</keyword>
<keyword id="KW-1185">Reference proteome</keyword>
<keyword id="KW-0812">Transmembrane</keyword>
<keyword id="KW-1133">Transmembrane helix</keyword>
<keyword id="KW-0813">Transport</keyword>